<sequence>MKIYAVGGAIRDALLGLPVRDRDYVVVGATPEQMAAQRFRPVGKDFPVFLHPDTHEEYALARTERKTAAGYHGFQFYYAPDVTLEQDLVRRDLTINAMAREVSPDGALVGPVVDPFGGQADLRAKLFRHVGDAFVEDPVRILRVARFAARFAEFAVAPDTAALMRAMVDAGEVDALVPERVWQELARGLMEAKPSRMFAVLRECGALARILPEIDALFGVPQRADYHPEVDTGVHVMMVIDHAAKQGYSLAVRFAALTHDLGKATTPADVLPRHIGHEGRSVDLLKPLCERLRVPNECRDLALVVAREHGNLHRVMEMGAAALVRLLERADALRKPARFAEALQASEADARGRLGLETKPYPQAERLRQALVAARAVDAGAIAQGLAGEPAKIKDAVHRARVRAVAQAVGVAD</sequence>
<proteinExistence type="inferred from homology"/>
<protein>
    <recommendedName>
        <fullName evidence="1">Multifunctional CCA protein</fullName>
    </recommendedName>
    <domain>
        <recommendedName>
            <fullName evidence="1">CCA-adding enzyme</fullName>
            <ecNumber evidence="1">2.7.7.72</ecNumber>
        </recommendedName>
        <alternativeName>
            <fullName evidence="1">CCA tRNA nucleotidyltransferase</fullName>
        </alternativeName>
        <alternativeName>
            <fullName evidence="1">tRNA CCA-pyrophosphorylase</fullName>
        </alternativeName>
        <alternativeName>
            <fullName evidence="1">tRNA adenylyl-/cytidylyl-transferase</fullName>
        </alternativeName>
        <alternativeName>
            <fullName evidence="1">tRNA nucleotidyltransferase</fullName>
        </alternativeName>
        <alternativeName>
            <fullName evidence="1">tRNA-NT</fullName>
        </alternativeName>
    </domain>
    <domain>
        <recommendedName>
            <fullName evidence="1">2'-nucleotidase</fullName>
            <ecNumber evidence="1">3.1.3.-</ecNumber>
        </recommendedName>
    </domain>
    <domain>
        <recommendedName>
            <fullName evidence="1">2',3'-cyclic phosphodiesterase</fullName>
            <ecNumber evidence="1">3.1.4.-</ecNumber>
        </recommendedName>
    </domain>
    <domain>
        <recommendedName>
            <fullName evidence="1">Phosphatase</fullName>
            <ecNumber evidence="1">3.1.3.-</ecNumber>
        </recommendedName>
    </domain>
</protein>
<gene>
    <name evidence="1" type="primary">cca</name>
    <name type="ordered locus">BURPS1106A_0272</name>
</gene>
<keyword id="KW-0067">ATP-binding</keyword>
<keyword id="KW-0378">Hydrolase</keyword>
<keyword id="KW-0460">Magnesium</keyword>
<keyword id="KW-0479">Metal-binding</keyword>
<keyword id="KW-0511">Multifunctional enzyme</keyword>
<keyword id="KW-0533">Nickel</keyword>
<keyword id="KW-0547">Nucleotide-binding</keyword>
<keyword id="KW-0548">Nucleotidyltransferase</keyword>
<keyword id="KW-0692">RNA repair</keyword>
<keyword id="KW-0694">RNA-binding</keyword>
<keyword id="KW-0808">Transferase</keyword>
<keyword id="KW-0819">tRNA processing</keyword>
<name>CCA_BURP0</name>
<dbReference type="EC" id="2.7.7.72" evidence="1"/>
<dbReference type="EC" id="3.1.3.-" evidence="1"/>
<dbReference type="EC" id="3.1.4.-" evidence="1"/>
<dbReference type="EMBL" id="CP000572">
    <property type="protein sequence ID" value="ABN88987.1"/>
    <property type="molecule type" value="Genomic_DNA"/>
</dbReference>
<dbReference type="RefSeq" id="WP_004525896.1">
    <property type="nucleotide sequence ID" value="NC_009076.1"/>
</dbReference>
<dbReference type="SMR" id="A3NQD4"/>
<dbReference type="KEGG" id="bpl:BURPS1106A_0272"/>
<dbReference type="HOGENOM" id="CLU_015961_1_1_4"/>
<dbReference type="Proteomes" id="UP000006738">
    <property type="component" value="Chromosome I"/>
</dbReference>
<dbReference type="GO" id="GO:0005524">
    <property type="term" value="F:ATP binding"/>
    <property type="evidence" value="ECO:0007669"/>
    <property type="project" value="UniProtKB-UniRule"/>
</dbReference>
<dbReference type="GO" id="GO:0004810">
    <property type="term" value="F:CCA tRNA nucleotidyltransferase activity"/>
    <property type="evidence" value="ECO:0007669"/>
    <property type="project" value="UniProtKB-UniRule"/>
</dbReference>
<dbReference type="GO" id="GO:0004112">
    <property type="term" value="F:cyclic-nucleotide phosphodiesterase activity"/>
    <property type="evidence" value="ECO:0007669"/>
    <property type="project" value="UniProtKB-UniRule"/>
</dbReference>
<dbReference type="GO" id="GO:0000287">
    <property type="term" value="F:magnesium ion binding"/>
    <property type="evidence" value="ECO:0007669"/>
    <property type="project" value="UniProtKB-UniRule"/>
</dbReference>
<dbReference type="GO" id="GO:0016791">
    <property type="term" value="F:phosphatase activity"/>
    <property type="evidence" value="ECO:0007669"/>
    <property type="project" value="UniProtKB-UniRule"/>
</dbReference>
<dbReference type="GO" id="GO:0000049">
    <property type="term" value="F:tRNA binding"/>
    <property type="evidence" value="ECO:0007669"/>
    <property type="project" value="UniProtKB-UniRule"/>
</dbReference>
<dbReference type="GO" id="GO:0042245">
    <property type="term" value="P:RNA repair"/>
    <property type="evidence" value="ECO:0007669"/>
    <property type="project" value="UniProtKB-KW"/>
</dbReference>
<dbReference type="GO" id="GO:0001680">
    <property type="term" value="P:tRNA 3'-terminal CCA addition"/>
    <property type="evidence" value="ECO:0007669"/>
    <property type="project" value="UniProtKB-UniRule"/>
</dbReference>
<dbReference type="CDD" id="cd05398">
    <property type="entry name" value="NT_ClassII-CCAase"/>
    <property type="match status" value="1"/>
</dbReference>
<dbReference type="Gene3D" id="3.30.460.10">
    <property type="entry name" value="Beta Polymerase, domain 2"/>
    <property type="match status" value="1"/>
</dbReference>
<dbReference type="Gene3D" id="1.10.3090.10">
    <property type="entry name" value="cca-adding enzyme, domain 2"/>
    <property type="match status" value="1"/>
</dbReference>
<dbReference type="HAMAP" id="MF_01261">
    <property type="entry name" value="CCA_bact_type1"/>
    <property type="match status" value="1"/>
</dbReference>
<dbReference type="HAMAP" id="MF_01262">
    <property type="entry name" value="CCA_bact_type2"/>
    <property type="match status" value="1"/>
</dbReference>
<dbReference type="InterPro" id="IPR012006">
    <property type="entry name" value="CCA_bact"/>
</dbReference>
<dbReference type="InterPro" id="IPR006674">
    <property type="entry name" value="HD_domain"/>
</dbReference>
<dbReference type="InterPro" id="IPR043519">
    <property type="entry name" value="NT_sf"/>
</dbReference>
<dbReference type="InterPro" id="IPR002646">
    <property type="entry name" value="PolA_pol_head_dom"/>
</dbReference>
<dbReference type="InterPro" id="IPR032828">
    <property type="entry name" value="PolyA_RNA-bd"/>
</dbReference>
<dbReference type="InterPro" id="IPR050124">
    <property type="entry name" value="tRNA_CCA-adding_enzyme"/>
</dbReference>
<dbReference type="NCBIfam" id="NF008137">
    <property type="entry name" value="PRK10885.1"/>
    <property type="match status" value="1"/>
</dbReference>
<dbReference type="PANTHER" id="PTHR47545">
    <property type="entry name" value="MULTIFUNCTIONAL CCA PROTEIN"/>
    <property type="match status" value="1"/>
</dbReference>
<dbReference type="PANTHER" id="PTHR47545:SF1">
    <property type="entry name" value="MULTIFUNCTIONAL CCA PROTEIN"/>
    <property type="match status" value="1"/>
</dbReference>
<dbReference type="Pfam" id="PF01966">
    <property type="entry name" value="HD"/>
    <property type="match status" value="1"/>
</dbReference>
<dbReference type="Pfam" id="PF01743">
    <property type="entry name" value="PolyA_pol"/>
    <property type="match status" value="1"/>
</dbReference>
<dbReference type="Pfam" id="PF12627">
    <property type="entry name" value="PolyA_pol_RNAbd"/>
    <property type="match status" value="1"/>
</dbReference>
<dbReference type="PIRSF" id="PIRSF000813">
    <property type="entry name" value="CCA_bact"/>
    <property type="match status" value="1"/>
</dbReference>
<dbReference type="SUPFAM" id="SSF81301">
    <property type="entry name" value="Nucleotidyltransferase"/>
    <property type="match status" value="1"/>
</dbReference>
<dbReference type="SUPFAM" id="SSF81891">
    <property type="entry name" value="Poly A polymerase C-terminal region-like"/>
    <property type="match status" value="1"/>
</dbReference>
<dbReference type="PROSITE" id="PS51831">
    <property type="entry name" value="HD"/>
    <property type="match status" value="1"/>
</dbReference>
<accession>A3NQD4</accession>
<reference key="1">
    <citation type="journal article" date="2010" name="Genome Biol. Evol.">
        <title>Continuing evolution of Burkholderia mallei through genome reduction and large-scale rearrangements.</title>
        <authorList>
            <person name="Losada L."/>
            <person name="Ronning C.M."/>
            <person name="DeShazer D."/>
            <person name="Woods D."/>
            <person name="Fedorova N."/>
            <person name="Kim H.S."/>
            <person name="Shabalina S.A."/>
            <person name="Pearson T.R."/>
            <person name="Brinkac L."/>
            <person name="Tan P."/>
            <person name="Nandi T."/>
            <person name="Crabtree J."/>
            <person name="Badger J."/>
            <person name="Beckstrom-Sternberg S."/>
            <person name="Saqib M."/>
            <person name="Schutzer S.E."/>
            <person name="Keim P."/>
            <person name="Nierman W.C."/>
        </authorList>
    </citation>
    <scope>NUCLEOTIDE SEQUENCE [LARGE SCALE GENOMIC DNA]</scope>
    <source>
        <strain>1106a</strain>
    </source>
</reference>
<comment type="function">
    <text evidence="1">Catalyzes the addition and repair of the essential 3'-terminal CCA sequence in tRNAs without using a nucleic acid template. Adds these three nucleotides in the order of C, C, and A to the tRNA nucleotide-73, using CTP and ATP as substrates and producing inorganic pyrophosphate. tRNA 3'-terminal CCA addition is required both for tRNA processing and repair. Also involved in tRNA surveillance by mediating tandem CCA addition to generate a CCACCA at the 3' terminus of unstable tRNAs. While stable tRNAs receive only 3'-terminal CCA, unstable tRNAs are marked with CCACCA and rapidly degraded.</text>
</comment>
<comment type="catalytic activity">
    <reaction evidence="1">
        <text>a tRNA precursor + 2 CTP + ATP = a tRNA with a 3' CCA end + 3 diphosphate</text>
        <dbReference type="Rhea" id="RHEA:14433"/>
        <dbReference type="Rhea" id="RHEA-COMP:10465"/>
        <dbReference type="Rhea" id="RHEA-COMP:10468"/>
        <dbReference type="ChEBI" id="CHEBI:30616"/>
        <dbReference type="ChEBI" id="CHEBI:33019"/>
        <dbReference type="ChEBI" id="CHEBI:37563"/>
        <dbReference type="ChEBI" id="CHEBI:74896"/>
        <dbReference type="ChEBI" id="CHEBI:83071"/>
        <dbReference type="EC" id="2.7.7.72"/>
    </reaction>
</comment>
<comment type="catalytic activity">
    <reaction evidence="1">
        <text>a tRNA with a 3' CCA end + 2 CTP + ATP = a tRNA with a 3' CCACCA end + 3 diphosphate</text>
        <dbReference type="Rhea" id="RHEA:76235"/>
        <dbReference type="Rhea" id="RHEA-COMP:10468"/>
        <dbReference type="Rhea" id="RHEA-COMP:18655"/>
        <dbReference type="ChEBI" id="CHEBI:30616"/>
        <dbReference type="ChEBI" id="CHEBI:33019"/>
        <dbReference type="ChEBI" id="CHEBI:37563"/>
        <dbReference type="ChEBI" id="CHEBI:83071"/>
        <dbReference type="ChEBI" id="CHEBI:195187"/>
    </reaction>
    <physiologicalReaction direction="left-to-right" evidence="1">
        <dbReference type="Rhea" id="RHEA:76236"/>
    </physiologicalReaction>
</comment>
<comment type="cofactor">
    <cofactor evidence="1">
        <name>Mg(2+)</name>
        <dbReference type="ChEBI" id="CHEBI:18420"/>
    </cofactor>
    <text evidence="1">Magnesium is required for nucleotidyltransferase activity.</text>
</comment>
<comment type="cofactor">
    <cofactor evidence="1">
        <name>Ni(2+)</name>
        <dbReference type="ChEBI" id="CHEBI:49786"/>
    </cofactor>
    <text evidence="1">Nickel for phosphatase activity.</text>
</comment>
<comment type="subunit">
    <text evidence="1">Monomer. Can also form homodimers and oligomers.</text>
</comment>
<comment type="domain">
    <text evidence="1">Comprises two domains: an N-terminal domain containing the nucleotidyltransferase activity and a C-terminal HD domain associated with both phosphodiesterase and phosphatase activities.</text>
</comment>
<comment type="miscellaneous">
    <text evidence="1">A single active site specifically recognizes both ATP and CTP and is responsible for their addition.</text>
</comment>
<comment type="similarity">
    <text evidence="1">Belongs to the tRNA nucleotidyltransferase/poly(A) polymerase family. Bacterial CCA-adding enzyme type 1 subfamily.</text>
</comment>
<evidence type="ECO:0000255" key="1">
    <source>
        <dbReference type="HAMAP-Rule" id="MF_01261"/>
    </source>
</evidence>
<feature type="chain" id="PRO_1000054256" description="Multifunctional CCA protein">
    <location>
        <begin position="1"/>
        <end position="413"/>
    </location>
</feature>
<feature type="domain" description="HD" evidence="1">
    <location>
        <begin position="232"/>
        <end position="333"/>
    </location>
</feature>
<feature type="binding site" evidence="1">
    <location>
        <position position="8"/>
    </location>
    <ligand>
        <name>ATP</name>
        <dbReference type="ChEBI" id="CHEBI:30616"/>
    </ligand>
</feature>
<feature type="binding site" evidence="1">
    <location>
        <position position="8"/>
    </location>
    <ligand>
        <name>CTP</name>
        <dbReference type="ChEBI" id="CHEBI:37563"/>
    </ligand>
</feature>
<feature type="binding site" evidence="1">
    <location>
        <position position="11"/>
    </location>
    <ligand>
        <name>ATP</name>
        <dbReference type="ChEBI" id="CHEBI:30616"/>
    </ligand>
</feature>
<feature type="binding site" evidence="1">
    <location>
        <position position="11"/>
    </location>
    <ligand>
        <name>CTP</name>
        <dbReference type="ChEBI" id="CHEBI:37563"/>
    </ligand>
</feature>
<feature type="binding site" evidence="1">
    <location>
        <position position="21"/>
    </location>
    <ligand>
        <name>Mg(2+)</name>
        <dbReference type="ChEBI" id="CHEBI:18420"/>
    </ligand>
</feature>
<feature type="binding site" evidence="1">
    <location>
        <position position="23"/>
    </location>
    <ligand>
        <name>Mg(2+)</name>
        <dbReference type="ChEBI" id="CHEBI:18420"/>
    </ligand>
</feature>
<feature type="binding site" evidence="1">
    <location>
        <position position="91"/>
    </location>
    <ligand>
        <name>ATP</name>
        <dbReference type="ChEBI" id="CHEBI:30616"/>
    </ligand>
</feature>
<feature type="binding site" evidence="1">
    <location>
        <position position="91"/>
    </location>
    <ligand>
        <name>CTP</name>
        <dbReference type="ChEBI" id="CHEBI:37563"/>
    </ligand>
</feature>
<feature type="binding site" evidence="1">
    <location>
        <position position="143"/>
    </location>
    <ligand>
        <name>ATP</name>
        <dbReference type="ChEBI" id="CHEBI:30616"/>
    </ligand>
</feature>
<feature type="binding site" evidence="1">
    <location>
        <position position="143"/>
    </location>
    <ligand>
        <name>CTP</name>
        <dbReference type="ChEBI" id="CHEBI:37563"/>
    </ligand>
</feature>
<feature type="binding site" evidence="1">
    <location>
        <position position="146"/>
    </location>
    <ligand>
        <name>ATP</name>
        <dbReference type="ChEBI" id="CHEBI:30616"/>
    </ligand>
</feature>
<feature type="binding site" evidence="1">
    <location>
        <position position="146"/>
    </location>
    <ligand>
        <name>CTP</name>
        <dbReference type="ChEBI" id="CHEBI:37563"/>
    </ligand>
</feature>
<organism>
    <name type="scientific">Burkholderia pseudomallei (strain 1106a)</name>
    <dbReference type="NCBI Taxonomy" id="357348"/>
    <lineage>
        <taxon>Bacteria</taxon>
        <taxon>Pseudomonadati</taxon>
        <taxon>Pseudomonadota</taxon>
        <taxon>Betaproteobacteria</taxon>
        <taxon>Burkholderiales</taxon>
        <taxon>Burkholderiaceae</taxon>
        <taxon>Burkholderia</taxon>
        <taxon>pseudomallei group</taxon>
    </lineage>
</organism>